<protein>
    <recommendedName>
        <fullName evidence="1">Large ribosomal subunit protein bL36B</fullName>
    </recommendedName>
    <alternativeName>
        <fullName evidence="2">50S ribosomal protein L36 2</fullName>
    </alternativeName>
</protein>
<reference key="1">
    <citation type="journal article" date="2007" name="PLoS Genet.">
        <title>Meningococcal genetic variation mechanisms viewed through comparative analysis of serogroup C strain FAM18.</title>
        <authorList>
            <person name="Bentley S.D."/>
            <person name="Vernikos G.S."/>
            <person name="Snyder L.A.S."/>
            <person name="Churcher C."/>
            <person name="Arrowsmith C."/>
            <person name="Chillingworth T."/>
            <person name="Cronin A."/>
            <person name="Davis P.H."/>
            <person name="Holroyd N.E."/>
            <person name="Jagels K."/>
            <person name="Maddison M."/>
            <person name="Moule S."/>
            <person name="Rabbinowitsch E."/>
            <person name="Sharp S."/>
            <person name="Unwin L."/>
            <person name="Whitehead S."/>
            <person name="Quail M.A."/>
            <person name="Achtman M."/>
            <person name="Barrell B.G."/>
            <person name="Saunders N.J."/>
            <person name="Parkhill J."/>
        </authorList>
    </citation>
    <scope>NUCLEOTIDE SEQUENCE [LARGE SCALE GENOMIC DNA]</scope>
    <source>
        <strain>ATCC 700532 / DSM 15464 / FAM18</strain>
    </source>
</reference>
<keyword id="KW-0687">Ribonucleoprotein</keyword>
<keyword id="KW-0689">Ribosomal protein</keyword>
<evidence type="ECO:0000255" key="1">
    <source>
        <dbReference type="HAMAP-Rule" id="MF_00251"/>
    </source>
</evidence>
<evidence type="ECO:0000305" key="2"/>
<feature type="chain" id="PRO_0000344698" description="Large ribosomal subunit protein bL36B">
    <location>
        <begin position="1"/>
        <end position="41"/>
    </location>
</feature>
<gene>
    <name evidence="1" type="primary">rpmJ2</name>
    <name type="ordered locus">NMC0919</name>
</gene>
<comment type="similarity">
    <text evidence="1">Belongs to the bacterial ribosomal protein bL36 family.</text>
</comment>
<organism>
    <name type="scientific">Neisseria meningitidis serogroup C / serotype 2a (strain ATCC 700532 / DSM 15464 / FAM18)</name>
    <dbReference type="NCBI Taxonomy" id="272831"/>
    <lineage>
        <taxon>Bacteria</taxon>
        <taxon>Pseudomonadati</taxon>
        <taxon>Pseudomonadota</taxon>
        <taxon>Betaproteobacteria</taxon>
        <taxon>Neisseriales</taxon>
        <taxon>Neisseriaceae</taxon>
        <taxon>Neisseria</taxon>
    </lineage>
</organism>
<accession>A1KTL0</accession>
<proteinExistence type="inferred from homology"/>
<dbReference type="EMBL" id="AM421808">
    <property type="protein sequence ID" value="CAM10196.1"/>
    <property type="molecule type" value="Genomic_DNA"/>
</dbReference>
<dbReference type="SMR" id="A1KTL0"/>
<dbReference type="KEGG" id="nmc:NMC0919"/>
<dbReference type="HOGENOM" id="CLU_135723_3_3_4"/>
<dbReference type="Proteomes" id="UP000002286">
    <property type="component" value="Chromosome"/>
</dbReference>
<dbReference type="GO" id="GO:1990904">
    <property type="term" value="C:ribonucleoprotein complex"/>
    <property type="evidence" value="ECO:0007669"/>
    <property type="project" value="UniProtKB-KW"/>
</dbReference>
<dbReference type="GO" id="GO:0005840">
    <property type="term" value="C:ribosome"/>
    <property type="evidence" value="ECO:0007669"/>
    <property type="project" value="UniProtKB-KW"/>
</dbReference>
<dbReference type="GO" id="GO:0003735">
    <property type="term" value="F:structural constituent of ribosome"/>
    <property type="evidence" value="ECO:0007669"/>
    <property type="project" value="InterPro"/>
</dbReference>
<dbReference type="GO" id="GO:0006412">
    <property type="term" value="P:translation"/>
    <property type="evidence" value="ECO:0007669"/>
    <property type="project" value="UniProtKB-UniRule"/>
</dbReference>
<dbReference type="HAMAP" id="MF_00251">
    <property type="entry name" value="Ribosomal_bL36"/>
    <property type="match status" value="1"/>
</dbReference>
<dbReference type="InterPro" id="IPR000473">
    <property type="entry name" value="Ribosomal_bL36"/>
</dbReference>
<dbReference type="InterPro" id="IPR035977">
    <property type="entry name" value="Ribosomal_bL36_sp"/>
</dbReference>
<dbReference type="InterPro" id="IPR047621">
    <property type="entry name" value="Ribosomal_L36_bact"/>
</dbReference>
<dbReference type="NCBIfam" id="NF002021">
    <property type="entry name" value="PRK00831.1"/>
    <property type="match status" value="1"/>
</dbReference>
<dbReference type="NCBIfam" id="TIGR01022">
    <property type="entry name" value="rpmJ_bact"/>
    <property type="match status" value="1"/>
</dbReference>
<dbReference type="PANTHER" id="PTHR47781">
    <property type="entry name" value="50S RIBOSOMAL PROTEIN L36 2"/>
    <property type="match status" value="1"/>
</dbReference>
<dbReference type="PANTHER" id="PTHR47781:SF1">
    <property type="entry name" value="LARGE RIBOSOMAL SUBUNIT PROTEIN BL36B"/>
    <property type="match status" value="1"/>
</dbReference>
<dbReference type="Pfam" id="PF00444">
    <property type="entry name" value="Ribosomal_L36"/>
    <property type="match status" value="1"/>
</dbReference>
<dbReference type="SUPFAM" id="SSF57840">
    <property type="entry name" value="Ribosomal protein L36"/>
    <property type="match status" value="1"/>
</dbReference>
<dbReference type="PROSITE" id="PS00828">
    <property type="entry name" value="RIBOSOMAL_L36"/>
    <property type="match status" value="1"/>
</dbReference>
<name>RL362_NEIMF</name>
<sequence>MQVLSSLKTAKQRHRDCQIVRRRGKVYVICKSNPRFKARQR</sequence>